<evidence type="ECO:0000255" key="1">
    <source>
        <dbReference type="HAMAP-Rule" id="MF_00449"/>
    </source>
</evidence>
<accession>Q8TRL1</accession>
<comment type="function">
    <text evidence="1">Part of the Rad50/Mre11 complex, which is involved in the early steps of DNA double-strand break (DSB) repair. The complex may facilitate opening of the processed DNA ends to aid in the recruitment of HerA and NurA. Rad50 controls the balance between DNA end bridging and DNA resection via ATP-dependent structural rearrangements of the Rad50/Mre11 complex.</text>
</comment>
<comment type="cofactor">
    <cofactor evidence="1">
        <name>Zn(2+)</name>
        <dbReference type="ChEBI" id="CHEBI:29105"/>
    </cofactor>
    <text evidence="1">Binds 1 zinc ion per homodimer.</text>
</comment>
<comment type="subunit">
    <text evidence="1">Homodimer. Forms a heterotetramer composed of two Mre11 subunits and two Rad50 subunits.</text>
</comment>
<comment type="domain">
    <text evidence="1">The two conserved Cys that bind zinc constitute the zinc-hook, which separates the large intramolecular coiled coil regions. The 2 Cys residues coordinate one molecule of zinc with the help of the 2 Cys residues of the zinc-hook of another Rad50 molecule, thereby forming a V-shaped homodimer.</text>
</comment>
<comment type="similarity">
    <text evidence="1">Belongs to the SMC family. RAD50 subfamily.</text>
</comment>
<dbReference type="EMBL" id="AE010299">
    <property type="protein sequence ID" value="AAM04585.1"/>
    <property type="molecule type" value="Genomic_DNA"/>
</dbReference>
<dbReference type="RefSeq" id="WP_011021188.1">
    <property type="nucleotide sequence ID" value="NC_003552.1"/>
</dbReference>
<dbReference type="STRING" id="188937.MA_1164"/>
<dbReference type="EnsemblBacteria" id="AAM04585">
    <property type="protein sequence ID" value="AAM04585"/>
    <property type="gene ID" value="MA_1164"/>
</dbReference>
<dbReference type="GeneID" id="1473052"/>
<dbReference type="KEGG" id="mac:MA_1164"/>
<dbReference type="HOGENOM" id="CLU_004785_0_1_2"/>
<dbReference type="InParanoid" id="Q8TRL1"/>
<dbReference type="OrthoDB" id="25344at2157"/>
<dbReference type="PhylomeDB" id="Q8TRL1"/>
<dbReference type="Proteomes" id="UP000002487">
    <property type="component" value="Chromosome"/>
</dbReference>
<dbReference type="GO" id="GO:1990391">
    <property type="term" value="C:DNA repair complex"/>
    <property type="evidence" value="ECO:0000318"/>
    <property type="project" value="GO_Central"/>
</dbReference>
<dbReference type="GO" id="GO:0005524">
    <property type="term" value="F:ATP binding"/>
    <property type="evidence" value="ECO:0007669"/>
    <property type="project" value="UniProtKB-UniRule"/>
</dbReference>
<dbReference type="GO" id="GO:0016887">
    <property type="term" value="F:ATP hydrolysis activity"/>
    <property type="evidence" value="ECO:0007669"/>
    <property type="project" value="UniProtKB-UniRule"/>
</dbReference>
<dbReference type="GO" id="GO:0004529">
    <property type="term" value="F:DNA exonuclease activity"/>
    <property type="evidence" value="ECO:0000318"/>
    <property type="project" value="GO_Central"/>
</dbReference>
<dbReference type="GO" id="GO:0008270">
    <property type="term" value="F:zinc ion binding"/>
    <property type="evidence" value="ECO:0007669"/>
    <property type="project" value="UniProtKB-UniRule"/>
</dbReference>
<dbReference type="GO" id="GO:0006281">
    <property type="term" value="P:DNA repair"/>
    <property type="evidence" value="ECO:0000318"/>
    <property type="project" value="GO_Central"/>
</dbReference>
<dbReference type="GO" id="GO:0006302">
    <property type="term" value="P:double-strand break repair"/>
    <property type="evidence" value="ECO:0007669"/>
    <property type="project" value="UniProtKB-UniRule"/>
</dbReference>
<dbReference type="Gene3D" id="1.10.287.510">
    <property type="entry name" value="Helix hairpin bin"/>
    <property type="match status" value="1"/>
</dbReference>
<dbReference type="Gene3D" id="3.40.50.300">
    <property type="entry name" value="P-loop containing nucleotide triphosphate hydrolases"/>
    <property type="match status" value="2"/>
</dbReference>
<dbReference type="HAMAP" id="MF_00449">
    <property type="entry name" value="RAD50"/>
    <property type="match status" value="1"/>
</dbReference>
<dbReference type="InterPro" id="IPR027417">
    <property type="entry name" value="P-loop_NTPase"/>
</dbReference>
<dbReference type="InterPro" id="IPR022982">
    <property type="entry name" value="Rad50_ATPase_archaeal"/>
</dbReference>
<dbReference type="InterPro" id="IPR003395">
    <property type="entry name" value="RecF/RecN/SMC_N"/>
</dbReference>
<dbReference type="InterPro" id="IPR013134">
    <property type="entry name" value="Zn_hook_RAD50"/>
</dbReference>
<dbReference type="NCBIfam" id="NF002572">
    <property type="entry name" value="PRK02224.1"/>
    <property type="match status" value="1"/>
</dbReference>
<dbReference type="PANTHER" id="PTHR32114">
    <property type="entry name" value="ABC TRANSPORTER ABCH.3"/>
    <property type="match status" value="1"/>
</dbReference>
<dbReference type="PANTHER" id="PTHR32114:SF2">
    <property type="entry name" value="ABC TRANSPORTER ABCH.3"/>
    <property type="match status" value="1"/>
</dbReference>
<dbReference type="Pfam" id="PF02463">
    <property type="entry name" value="SMC_N"/>
    <property type="match status" value="1"/>
</dbReference>
<dbReference type="SUPFAM" id="SSF52540">
    <property type="entry name" value="P-loop containing nucleoside triphosphate hydrolases"/>
    <property type="match status" value="1"/>
</dbReference>
<dbReference type="SUPFAM" id="SSF75712">
    <property type="entry name" value="Rad50 coiled-coil Zn hook"/>
    <property type="match status" value="1"/>
</dbReference>
<dbReference type="PROSITE" id="PS51131">
    <property type="entry name" value="ZN_HOOK"/>
    <property type="match status" value="1"/>
</dbReference>
<name>RAD50_METAC</name>
<organism>
    <name type="scientific">Methanosarcina acetivorans (strain ATCC 35395 / DSM 2834 / JCM 12185 / C2A)</name>
    <dbReference type="NCBI Taxonomy" id="188937"/>
    <lineage>
        <taxon>Archaea</taxon>
        <taxon>Methanobacteriati</taxon>
        <taxon>Methanobacteriota</taxon>
        <taxon>Stenosarchaea group</taxon>
        <taxon>Methanomicrobia</taxon>
        <taxon>Methanosarcinales</taxon>
        <taxon>Methanosarcinaceae</taxon>
        <taxon>Methanosarcina</taxon>
    </lineage>
</organism>
<sequence length="1074" mass="121649">MKLKNLYIENIRSYRKLDFTFEDGVTVISGVNGSGKSSLLEACFMGLFGSKILSKDFVLADMIFKGAETAKINLGFEHLGKEYLIEQAFRYSSKSENASSSKCVLYADGENIIDQATRTYEEVRTLLNMDEEAYRNCAYIRQGEIDVLINAKPKDRQRMIDDLLQLGKLEEYRERTGYAKTAVRRLERDTKNSLVGVKAEIEGIESTEPVKALNGLKQKAKETDGSLKELNEKKDYAAARKGELDLRIAEYRERLQEIEVLKEAIRKTQEDKAGCFKEKEAFSGEVQGQRRILLELGEENTGLRDDCGFGDLEIEALLLHQEKEESSAREKVNAVSKDLALLLKEGETGSQALCELEKEKTQAERTLLECRTSIGAANKEIEGYRENIRKLEEESKGLREKAGFKAASGAADEIALLIKEFEEKESLLRDRKNEASTKLGLSLKEKETCDLNLVELEKELQNAGAAVRKGSTEIEALEKELRENSKAVLDIQEQKSEVLAELKGLGFAADQLENLEDFSELLLENKSRLHGKEKELEATLRELENNIRKNRELFAAGKCPTCGQELKGSEIACTAEECEDKKEKLASELADIKVQHAELEKKITRLKDAKKLEKRISDYDIEIEKLQEKAKASGKLIETHRARIEEDALKLESLDKRKQELETSGRQLLSDIKTLQVQEAEARKAHIEGEKTLIEVKTLDRKLAENTAEIESLNGKIRTSLALIENYGERLGELNDKLKALAEKENLSKEKLKALELALEAAQKKENEAKKAHSESEKLLGQAKKLQANLLSMENIKHKISELEAAIRNLAEKVGFLDREILERSERIRQLGEKLEGNRLSELQQKRAQFEQAQAKITENIREKTEEKDSLLKEIGMLENSLKRLRELRKELKALENRQLYLEAVYSNAEELENTYIRVRADMRARNIGALSVLLNEMFAFMYTNNAYSHIELDPEYNLTVYRKDGTPLEPKLLSGGERAIFNLVLRCAIYRLLALGFGGDKADGLPPMILDEPTVFLDRGHIRQLLKLIDMMRSIGVGQIIVVSHDDSLIDSADHVFQVEKDPLTNMSSITRL</sequence>
<proteinExistence type="inferred from homology"/>
<gene>
    <name evidence="1" type="primary">rad50</name>
    <name type="ordered locus">MA_1164</name>
</gene>
<reference key="1">
    <citation type="journal article" date="2002" name="Genome Res.">
        <title>The genome of Methanosarcina acetivorans reveals extensive metabolic and physiological diversity.</title>
        <authorList>
            <person name="Galagan J.E."/>
            <person name="Nusbaum C."/>
            <person name="Roy A."/>
            <person name="Endrizzi M.G."/>
            <person name="Macdonald P."/>
            <person name="FitzHugh W."/>
            <person name="Calvo S."/>
            <person name="Engels R."/>
            <person name="Smirnov S."/>
            <person name="Atnoor D."/>
            <person name="Brown A."/>
            <person name="Allen N."/>
            <person name="Naylor J."/>
            <person name="Stange-Thomann N."/>
            <person name="DeArellano K."/>
            <person name="Johnson R."/>
            <person name="Linton L."/>
            <person name="McEwan P."/>
            <person name="McKernan K."/>
            <person name="Talamas J."/>
            <person name="Tirrell A."/>
            <person name="Ye W."/>
            <person name="Zimmer A."/>
            <person name="Barber R.D."/>
            <person name="Cann I."/>
            <person name="Graham D.E."/>
            <person name="Grahame D.A."/>
            <person name="Guss A.M."/>
            <person name="Hedderich R."/>
            <person name="Ingram-Smith C."/>
            <person name="Kuettner H.C."/>
            <person name="Krzycki J.A."/>
            <person name="Leigh J.A."/>
            <person name="Li W."/>
            <person name="Liu J."/>
            <person name="Mukhopadhyay B."/>
            <person name="Reeve J.N."/>
            <person name="Smith K."/>
            <person name="Springer T.A."/>
            <person name="Umayam L.A."/>
            <person name="White O."/>
            <person name="White R.H."/>
            <person name="de Macario E.C."/>
            <person name="Ferry J.G."/>
            <person name="Jarrell K.F."/>
            <person name="Jing H."/>
            <person name="Macario A.J.L."/>
            <person name="Paulsen I.T."/>
            <person name="Pritchett M."/>
            <person name="Sowers K.R."/>
            <person name="Swanson R.V."/>
            <person name="Zinder S.H."/>
            <person name="Lander E."/>
            <person name="Metcalf W.W."/>
            <person name="Birren B."/>
        </authorList>
    </citation>
    <scope>NUCLEOTIDE SEQUENCE [LARGE SCALE GENOMIC DNA]</scope>
    <source>
        <strain>ATCC 35395 / DSM 2834 / JCM 12185 / C2A</strain>
    </source>
</reference>
<feature type="chain" id="PRO_0000138653" description="DNA double-strand break repair Rad50 ATPase">
    <location>
        <begin position="1"/>
        <end position="1074"/>
    </location>
</feature>
<feature type="domain" description="Zinc-hook" evidence="1">
    <location>
        <begin position="512"/>
        <end position="611"/>
    </location>
</feature>
<feature type="coiled-coil region" evidence="1">
    <location>
        <begin position="355"/>
        <end position="402"/>
    </location>
</feature>
<feature type="coiled-coil region" evidence="1">
    <location>
        <begin position="452"/>
        <end position="506"/>
    </location>
</feature>
<feature type="coiled-coil region" evidence="1">
    <location>
        <begin position="574"/>
        <end position="611"/>
    </location>
</feature>
<feature type="coiled-coil region" evidence="1">
    <location>
        <begin position="649"/>
        <end position="678"/>
    </location>
</feature>
<feature type="coiled-coil region" evidence="1">
    <location>
        <begin position="749"/>
        <end position="823"/>
    </location>
</feature>
<feature type="coiled-coil region" evidence="1">
    <location>
        <begin position="865"/>
        <end position="895"/>
    </location>
</feature>
<feature type="binding site" evidence="1">
    <location>
        <position position="12"/>
    </location>
    <ligand>
        <name>ATP</name>
        <dbReference type="ChEBI" id="CHEBI:30616"/>
    </ligand>
</feature>
<feature type="binding site" evidence="1">
    <location>
        <begin position="32"/>
        <end position="38"/>
    </location>
    <ligand>
        <name>ATP</name>
        <dbReference type="ChEBI" id="CHEBI:30616"/>
    </ligand>
</feature>
<feature type="binding site" evidence="1">
    <location>
        <position position="142"/>
    </location>
    <ligand>
        <name>ATP</name>
        <dbReference type="ChEBI" id="CHEBI:30616"/>
    </ligand>
</feature>
<feature type="binding site" evidence="1">
    <location>
        <position position="559"/>
    </location>
    <ligand>
        <name>Zn(2+)</name>
        <dbReference type="ChEBI" id="CHEBI:29105"/>
    </ligand>
</feature>
<feature type="binding site" evidence="1">
    <location>
        <position position="562"/>
    </location>
    <ligand>
        <name>Zn(2+)</name>
        <dbReference type="ChEBI" id="CHEBI:29105"/>
    </ligand>
</feature>
<feature type="binding site" evidence="1">
    <location>
        <begin position="973"/>
        <end position="978"/>
    </location>
    <ligand>
        <name>ATP</name>
        <dbReference type="ChEBI" id="CHEBI:30616"/>
    </ligand>
</feature>
<keyword id="KW-0067">ATP-binding</keyword>
<keyword id="KW-0175">Coiled coil</keyword>
<keyword id="KW-0227">DNA damage</keyword>
<keyword id="KW-0234">DNA repair</keyword>
<keyword id="KW-0378">Hydrolase</keyword>
<keyword id="KW-0479">Metal-binding</keyword>
<keyword id="KW-0547">Nucleotide-binding</keyword>
<keyword id="KW-1185">Reference proteome</keyword>
<keyword id="KW-0862">Zinc</keyword>
<protein>
    <recommendedName>
        <fullName evidence="1">DNA double-strand break repair Rad50 ATPase</fullName>
    </recommendedName>
</protein>